<accession>O87392</accession>
<reference key="1">
    <citation type="submission" date="1998-03" db="EMBL/GenBank/DDBJ databases">
        <authorList>
            <person name="Powers E.L."/>
            <person name="Vuyyuru V."/>
            <person name="Kahn M.L."/>
        </authorList>
    </citation>
    <scope>NUCLEOTIDE SEQUENCE [GENOMIC DNA]</scope>
    <source>
        <strain>1021</strain>
    </source>
</reference>
<reference key="2">
    <citation type="journal article" date="2001" name="Proc. Natl. Acad. Sci. U.S.A.">
        <title>Analysis of the chromosome sequence of the legume symbiont Sinorhizobium meliloti strain 1021.</title>
        <authorList>
            <person name="Capela D."/>
            <person name="Barloy-Hubler F."/>
            <person name="Gouzy J."/>
            <person name="Bothe G."/>
            <person name="Ampe F."/>
            <person name="Batut J."/>
            <person name="Boistard P."/>
            <person name="Becker A."/>
            <person name="Boutry M."/>
            <person name="Cadieu E."/>
            <person name="Dreano S."/>
            <person name="Gloux S."/>
            <person name="Godrie T."/>
            <person name="Goffeau A."/>
            <person name="Kahn D."/>
            <person name="Kiss E."/>
            <person name="Lelaure V."/>
            <person name="Masuy D."/>
            <person name="Pohl T."/>
            <person name="Portetelle D."/>
            <person name="Puehler A."/>
            <person name="Purnelle B."/>
            <person name="Ramsperger U."/>
            <person name="Renard C."/>
            <person name="Thebault P."/>
            <person name="Vandenbol M."/>
            <person name="Weidner S."/>
            <person name="Galibert F."/>
        </authorList>
    </citation>
    <scope>NUCLEOTIDE SEQUENCE [LARGE SCALE GENOMIC DNA]</scope>
    <source>
        <strain>1021</strain>
    </source>
</reference>
<reference key="3">
    <citation type="journal article" date="2001" name="Science">
        <title>The composite genome of the legume symbiont Sinorhizobium meliloti.</title>
        <authorList>
            <person name="Galibert F."/>
            <person name="Finan T.M."/>
            <person name="Long S.R."/>
            <person name="Puehler A."/>
            <person name="Abola P."/>
            <person name="Ampe F."/>
            <person name="Barloy-Hubler F."/>
            <person name="Barnett M.J."/>
            <person name="Becker A."/>
            <person name="Boistard P."/>
            <person name="Bothe G."/>
            <person name="Boutry M."/>
            <person name="Bowser L."/>
            <person name="Buhrmester J."/>
            <person name="Cadieu E."/>
            <person name="Capela D."/>
            <person name="Chain P."/>
            <person name="Cowie A."/>
            <person name="Davis R.W."/>
            <person name="Dreano S."/>
            <person name="Federspiel N.A."/>
            <person name="Fisher R.F."/>
            <person name="Gloux S."/>
            <person name="Godrie T."/>
            <person name="Goffeau A."/>
            <person name="Golding B."/>
            <person name="Gouzy J."/>
            <person name="Gurjal M."/>
            <person name="Hernandez-Lucas I."/>
            <person name="Hong A."/>
            <person name="Huizar L."/>
            <person name="Hyman R.W."/>
            <person name="Jones T."/>
            <person name="Kahn D."/>
            <person name="Kahn M.L."/>
            <person name="Kalman S."/>
            <person name="Keating D.H."/>
            <person name="Kiss E."/>
            <person name="Komp C."/>
            <person name="Lelaure V."/>
            <person name="Masuy D."/>
            <person name="Palm C."/>
            <person name="Peck M.C."/>
            <person name="Pohl T.M."/>
            <person name="Portetelle D."/>
            <person name="Purnelle B."/>
            <person name="Ramsperger U."/>
            <person name="Surzycki R."/>
            <person name="Thebault P."/>
            <person name="Vandenbol M."/>
            <person name="Vorhoelter F.J."/>
            <person name="Weidner S."/>
            <person name="Wells D.H."/>
            <person name="Wong K."/>
            <person name="Yeh K.-C."/>
            <person name="Batut J."/>
        </authorList>
    </citation>
    <scope>NUCLEOTIDE SEQUENCE [LARGE SCALE GENOMIC DNA]</scope>
    <source>
        <strain>1021</strain>
    </source>
</reference>
<protein>
    <recommendedName>
        <fullName>Glutamate synthase large subunit-like protein</fullName>
    </recommendedName>
</protein>
<gene>
    <name type="primary">glxD</name>
    <name type="ordered locus">R00089</name>
    <name type="ORF">SMc02612</name>
</gene>
<proteinExistence type="inferred from homology"/>
<organism>
    <name type="scientific">Rhizobium meliloti (strain 1021)</name>
    <name type="common">Ensifer meliloti</name>
    <name type="synonym">Sinorhizobium meliloti</name>
    <dbReference type="NCBI Taxonomy" id="266834"/>
    <lineage>
        <taxon>Bacteria</taxon>
        <taxon>Pseudomonadati</taxon>
        <taxon>Pseudomonadota</taxon>
        <taxon>Alphaproteobacteria</taxon>
        <taxon>Hyphomicrobiales</taxon>
        <taxon>Rhizobiaceae</taxon>
        <taxon>Sinorhizobium/Ensifer group</taxon>
        <taxon>Sinorhizobium</taxon>
    </lineage>
</organism>
<evidence type="ECO:0000256" key="1">
    <source>
        <dbReference type="SAM" id="MobiDB-lite"/>
    </source>
</evidence>
<evidence type="ECO:0000305" key="2"/>
<comment type="similarity">
    <text evidence="2">Belongs to the glutamate synthase family.</text>
</comment>
<dbReference type="EMBL" id="AF055582">
    <property type="protein sequence ID" value="AAC62222.1"/>
    <property type="molecule type" value="Genomic_DNA"/>
</dbReference>
<dbReference type="EMBL" id="AL591688">
    <property type="protein sequence ID" value="CAC41476.1"/>
    <property type="molecule type" value="Genomic_DNA"/>
</dbReference>
<dbReference type="RefSeq" id="NP_384195.1">
    <property type="nucleotide sequence ID" value="NC_003047.1"/>
</dbReference>
<dbReference type="RefSeq" id="WP_010968347.1">
    <property type="nucleotide sequence ID" value="NC_003047.1"/>
</dbReference>
<dbReference type="SMR" id="O87392"/>
<dbReference type="EnsemblBacteria" id="CAC41476">
    <property type="protein sequence ID" value="CAC41476"/>
    <property type="gene ID" value="SMc02612"/>
</dbReference>
<dbReference type="KEGG" id="sme:SMc02612"/>
<dbReference type="PATRIC" id="fig|266834.11.peg.1446"/>
<dbReference type="eggNOG" id="COG0069">
    <property type="taxonomic scope" value="Bacteria"/>
</dbReference>
<dbReference type="HOGENOM" id="CLU_023342_1_1_5"/>
<dbReference type="OrthoDB" id="9795032at2"/>
<dbReference type="Proteomes" id="UP000001976">
    <property type="component" value="Chromosome"/>
</dbReference>
<dbReference type="GO" id="GO:0015930">
    <property type="term" value="F:glutamate synthase activity"/>
    <property type="evidence" value="ECO:0007669"/>
    <property type="project" value="InterPro"/>
</dbReference>
<dbReference type="GO" id="GO:0006537">
    <property type="term" value="P:glutamate biosynthetic process"/>
    <property type="evidence" value="ECO:0007669"/>
    <property type="project" value="InterPro"/>
</dbReference>
<dbReference type="CDD" id="cd02808">
    <property type="entry name" value="GltS_FMN"/>
    <property type="match status" value="1"/>
</dbReference>
<dbReference type="Gene3D" id="3.20.20.70">
    <property type="entry name" value="Aldolase class I"/>
    <property type="match status" value="1"/>
</dbReference>
<dbReference type="InterPro" id="IPR013785">
    <property type="entry name" value="Aldolase_TIM"/>
</dbReference>
<dbReference type="InterPro" id="IPR024188">
    <property type="entry name" value="GltB"/>
</dbReference>
<dbReference type="InterPro" id="IPR043578">
    <property type="entry name" value="GltB_archl_type"/>
</dbReference>
<dbReference type="InterPro" id="IPR002932">
    <property type="entry name" value="Glu_synthdom"/>
</dbReference>
<dbReference type="PANTHER" id="PTHR43819">
    <property type="entry name" value="ARCHAEAL-TYPE GLUTAMATE SYNTHASE [NADPH]"/>
    <property type="match status" value="1"/>
</dbReference>
<dbReference type="PANTHER" id="PTHR43819:SF1">
    <property type="entry name" value="ARCHAEAL-TYPE GLUTAMATE SYNTHASE [NADPH]"/>
    <property type="match status" value="1"/>
</dbReference>
<dbReference type="Pfam" id="PF01645">
    <property type="entry name" value="Glu_synthase"/>
    <property type="match status" value="2"/>
</dbReference>
<dbReference type="PIRSF" id="PIRSF500061">
    <property type="entry name" value="GOGAT_lg2_archl"/>
    <property type="match status" value="1"/>
</dbReference>
<dbReference type="PIRSF" id="PIRSF006429">
    <property type="entry name" value="GOGAT_lg_2"/>
    <property type="match status" value="1"/>
</dbReference>
<dbReference type="SUPFAM" id="SSF51395">
    <property type="entry name" value="FMN-linked oxidoreductases"/>
    <property type="match status" value="1"/>
</dbReference>
<sequence>MSYHNPYTPPRKSATFDDYTLAEIRRAAATGIYDIRGAGTKRKVPHFDDLLFLGASISRYPLEGYREKCDTSVVLGTRFAKKPIHLKIPITIAGMSFGALSGPAKEALGRGATASGTSTTTGDGGMTDEERGHSQTLVYQYLPSRYGMNPKDLRRADAIEVVVGQGAKPGGGGMLLGQKISDRVANMRNLPKGIDQRSACRHPDWTGPDDLEIKILELREITDWEKPIYVKVGGARPYYDTALAVKAGADVVVLDGMQGGTAATQDVFIENVGMPTLACIRPAVQALQDLGMHRKVQLVVSGGIRSGADVAKALALGADAVAIGTAALVAIGDNDPHWEEEYQKLGTTAGAYDDWHEGKDPAGITTQDPELMKRLDPVAAGRRLANYLKVMTLEAQTIARACGKNHLHNLEPEDLCALTMEAAAMAQVPLAGTSWYPGKGTF</sequence>
<name>GLXD_RHIME</name>
<feature type="chain" id="PRO_0000170803" description="Glutamate synthase large subunit-like protein">
    <location>
        <begin position="1"/>
        <end position="442"/>
    </location>
</feature>
<feature type="region of interest" description="Disordered" evidence="1">
    <location>
        <begin position="108"/>
        <end position="133"/>
    </location>
</feature>
<feature type="compositionally biased region" description="Low complexity" evidence="1">
    <location>
        <begin position="109"/>
        <end position="121"/>
    </location>
</feature>
<feature type="sequence conflict" description="In Ref. 1; AAC62222." evidence="2" ref="1">
    <original>A</original>
    <variation>V</variation>
    <location>
        <position position="322"/>
    </location>
</feature>
<keyword id="KW-0560">Oxidoreductase</keyword>
<keyword id="KW-1185">Reference proteome</keyword>